<evidence type="ECO:0000250" key="1"/>
<evidence type="ECO:0000255" key="2">
    <source>
        <dbReference type="PROSITE-ProRule" id="PRU00108"/>
    </source>
</evidence>
<evidence type="ECO:0000256" key="3">
    <source>
        <dbReference type="SAM" id="MobiDB-lite"/>
    </source>
</evidence>
<evidence type="ECO:0000269" key="4">
    <source>
    </source>
</evidence>
<evidence type="ECO:0000269" key="5">
    <source>
    </source>
</evidence>
<evidence type="ECO:0000305" key="6"/>
<accession>Q707Y3</accession>
<accession>O93957</accession>
<keyword id="KW-0238">DNA-binding</keyword>
<keyword id="KW-0371">Homeobox</keyword>
<keyword id="KW-0539">Nucleus</keyword>
<keyword id="KW-0678">Repressor</keyword>
<keyword id="KW-0804">Transcription</keyword>
<keyword id="KW-0805">Transcription regulation</keyword>
<reference key="1">
    <citation type="journal article" date="1999" name="Mol. Gen. Genet.">
        <title>The MATA locus of the dimorphic yeast Yarrowia lipolytica consists of two divergently orientated genes.</title>
        <authorList>
            <person name="Kurischko C."/>
            <person name="Schilhabel M.B."/>
            <person name="Kunze I."/>
            <person name="Franzl E."/>
        </authorList>
    </citation>
    <scope>NUCLEOTIDE SEQUENCE [GENOMIC DNA]</scope>
    <scope>FUNCTION</scope>
    <source>
        <strain>ATCC 20460 / CBS 7504 / CLIB 89 / VTT C-10879 / W29 / IFP29</strain>
    </source>
</reference>
<reference key="2">
    <citation type="journal article" date="2004" name="Proc. Natl. Acad. Sci. U.S.A.">
        <title>Evolution of the MAT locus and its Ho endonuclease in yeast species.</title>
        <authorList>
            <person name="Butler G."/>
            <person name="Kenny C."/>
            <person name="Fagan A."/>
            <person name="Kurischko C."/>
            <person name="Gaillardin C."/>
            <person name="Wolfe K.H."/>
        </authorList>
    </citation>
    <scope>NUCLEOTIDE SEQUENCE [GENOMIC DNA]</scope>
    <source>
        <strain>ATCC 20460 / CBS 7504 / CLIB 89 / VTT C-10879 / W29 / IFP29</strain>
    </source>
</reference>
<reference key="3">
    <citation type="journal article" date="1992" name="Mol. Gen. Genet.">
        <title>Cloning of the mating-type gene MATA of the yeast Yarrowia lipolytica.</title>
        <authorList>
            <person name="Kurischko C."/>
            <person name="Fournier P."/>
            <person name="Chasles M."/>
            <person name="Weber H."/>
            <person name="Gaillardin C."/>
        </authorList>
    </citation>
    <scope>FUNCTION</scope>
    <scope>DEVELOPMENTAL STAGE</scope>
    <source>
        <strain>ATCC 20460 / CBS 7504 / CLIB 89 / VTT C-10879 / W29 / IFP29</strain>
    </source>
</reference>
<comment type="function">
    <text evidence="1 4 5">Mating type proteins are sequence specific DNA-binding proteins that act as master switches in yeast differentiation by controlling gene expression in a cell type-specific fashion. Transcriptional corepressor that acts in conjunction with ALPHA2 to repress transcription of haploid-specific genes (By similarity). Required for induction of sporulation in diploid cells.</text>
</comment>
<comment type="subunit">
    <text evidence="1">Forms a heterodimer with ALPHA2.</text>
</comment>
<comment type="subcellular location">
    <subcellularLocation>
        <location evidence="2">Nucleus</location>
    </subcellularLocation>
</comment>
<comment type="developmental stage">
    <text evidence="5">Only present in A-cells and in A/B diploid cells.</text>
</comment>
<comment type="similarity">
    <text evidence="6">Belongs to the MATA1 family.</text>
</comment>
<comment type="sequence caution" evidence="6">
    <conflict type="erroneous gene model prediction">
        <sequence resource="EMBL-CDS" id="CAA07612"/>
    </conflict>
</comment>
<name>MATA1_YARLL</name>
<gene>
    <name type="primary">MATA1</name>
</gene>
<protein>
    <recommendedName>
        <fullName>Mating-type protein A1</fullName>
    </recommendedName>
    <alternativeName>
        <fullName>MATA1 transcription factor</fullName>
    </alternativeName>
</protein>
<organism>
    <name type="scientific">Yarrowia lipolytica</name>
    <name type="common">Candida lipolytica</name>
    <dbReference type="NCBI Taxonomy" id="4952"/>
    <lineage>
        <taxon>Eukaryota</taxon>
        <taxon>Fungi</taxon>
        <taxon>Dikarya</taxon>
        <taxon>Ascomycota</taxon>
        <taxon>Saccharomycotina</taxon>
        <taxon>Dipodascomycetes</taxon>
        <taxon>Dipodascales</taxon>
        <taxon>Dipodascales incertae sedis</taxon>
        <taxon>Yarrowia</taxon>
    </lineage>
</organism>
<dbReference type="EMBL" id="AJ007708">
    <property type="protein sequence ID" value="CAA07612.1"/>
    <property type="status" value="ALT_SEQ"/>
    <property type="molecule type" value="Genomic_DNA"/>
</dbReference>
<dbReference type="EMBL" id="AJ617306">
    <property type="protein sequence ID" value="CAE84422.1"/>
    <property type="molecule type" value="Genomic_DNA"/>
</dbReference>
<dbReference type="SMR" id="Q707Y3"/>
<dbReference type="EnsemblFungi" id="RDW32587">
    <property type="protein sequence ID" value="RDW32587"/>
    <property type="gene ID" value="B0I72DRAFT_82318"/>
</dbReference>
<dbReference type="VEuPathDB" id="FungiDB:YALI1_C09885g"/>
<dbReference type="GO" id="GO:0005634">
    <property type="term" value="C:nucleus"/>
    <property type="evidence" value="ECO:0007669"/>
    <property type="project" value="UniProtKB-SubCell"/>
</dbReference>
<dbReference type="GO" id="GO:0003677">
    <property type="term" value="F:DNA binding"/>
    <property type="evidence" value="ECO:0007669"/>
    <property type="project" value="UniProtKB-KW"/>
</dbReference>
<dbReference type="CDD" id="cd00086">
    <property type="entry name" value="homeodomain"/>
    <property type="match status" value="1"/>
</dbReference>
<dbReference type="Gene3D" id="1.10.10.60">
    <property type="entry name" value="Homeodomain-like"/>
    <property type="match status" value="1"/>
</dbReference>
<dbReference type="InterPro" id="IPR001356">
    <property type="entry name" value="HD"/>
</dbReference>
<dbReference type="InterPro" id="IPR009057">
    <property type="entry name" value="Homeodomain-like_sf"/>
</dbReference>
<dbReference type="Pfam" id="PF00046">
    <property type="entry name" value="Homeodomain"/>
    <property type="match status" value="1"/>
</dbReference>
<dbReference type="SMART" id="SM00389">
    <property type="entry name" value="HOX"/>
    <property type="match status" value="1"/>
</dbReference>
<dbReference type="SUPFAM" id="SSF46689">
    <property type="entry name" value="Homeodomain-like"/>
    <property type="match status" value="1"/>
</dbReference>
<dbReference type="PROSITE" id="PS50071">
    <property type="entry name" value="HOMEOBOX_2"/>
    <property type="match status" value="1"/>
</dbReference>
<feature type="chain" id="PRO_0000049183" description="Mating-type protein A1">
    <location>
        <begin position="1"/>
        <end position="176"/>
    </location>
</feature>
<feature type="DNA-binding region" description="Homeobox" evidence="2">
    <location>
        <begin position="88"/>
        <end position="147"/>
    </location>
</feature>
<feature type="region of interest" description="Disordered" evidence="3">
    <location>
        <begin position="141"/>
        <end position="176"/>
    </location>
</feature>
<proteinExistence type="evidence at transcript level"/>
<sequence>MPSRTPTDIWRCQRLILAARKGETTCQALHEQSIEISSSLKWFEEISEWMSKFPESGLYISTTIWTFLEGVPNEHRIKYDRLIRHYITYIQQLVPARLVTAYLDSLFKICSHPTRTERRIIGEHCGISLHQVTQWFTNRRFREPKTDSPDDGSTRFIPSPMTSPGSIDECSFPESP</sequence>